<evidence type="ECO:0000250" key="1">
    <source>
        <dbReference type="UniProtKB" id="Q9BZ67"/>
    </source>
</evidence>
<evidence type="ECO:0000255" key="2">
    <source>
        <dbReference type="PROSITE-ProRule" id="PRU00084"/>
    </source>
</evidence>
<evidence type="ECO:0000256" key="3">
    <source>
        <dbReference type="SAM" id="MobiDB-lite"/>
    </source>
</evidence>
<evidence type="ECO:0000269" key="4">
    <source>
    </source>
</evidence>
<evidence type="ECO:0000303" key="5">
    <source>
    </source>
</evidence>
<reference key="1">
    <citation type="journal article" date="2013" name="Nature">
        <title>The zebrafish reference genome sequence and its relationship to the human genome.</title>
        <authorList>
            <person name="Howe K."/>
            <person name="Clark M.D."/>
            <person name="Torroja C.F."/>
            <person name="Torrance J."/>
            <person name="Berthelot C."/>
            <person name="Muffato M."/>
            <person name="Collins J.E."/>
            <person name="Humphray S."/>
            <person name="McLaren K."/>
            <person name="Matthews L."/>
            <person name="McLaren S."/>
            <person name="Sealy I."/>
            <person name="Caccamo M."/>
            <person name="Churcher C."/>
            <person name="Scott C."/>
            <person name="Barrett J.C."/>
            <person name="Koch R."/>
            <person name="Rauch G.J."/>
            <person name="White S."/>
            <person name="Chow W."/>
            <person name="Kilian B."/>
            <person name="Quintais L.T."/>
            <person name="Guerra-Assuncao J.A."/>
            <person name="Zhou Y."/>
            <person name="Gu Y."/>
            <person name="Yen J."/>
            <person name="Vogel J.H."/>
            <person name="Eyre T."/>
            <person name="Redmond S."/>
            <person name="Banerjee R."/>
            <person name="Chi J."/>
            <person name="Fu B."/>
            <person name="Langley E."/>
            <person name="Maguire S.F."/>
            <person name="Laird G.K."/>
            <person name="Lloyd D."/>
            <person name="Kenyon E."/>
            <person name="Donaldson S."/>
            <person name="Sehra H."/>
            <person name="Almeida-King J."/>
            <person name="Loveland J."/>
            <person name="Trevanion S."/>
            <person name="Jones M."/>
            <person name="Quail M."/>
            <person name="Willey D."/>
            <person name="Hunt A."/>
            <person name="Burton J."/>
            <person name="Sims S."/>
            <person name="McLay K."/>
            <person name="Plumb B."/>
            <person name="Davis J."/>
            <person name="Clee C."/>
            <person name="Oliver K."/>
            <person name="Clark R."/>
            <person name="Riddle C."/>
            <person name="Elliot D."/>
            <person name="Threadgold G."/>
            <person name="Harden G."/>
            <person name="Ware D."/>
            <person name="Begum S."/>
            <person name="Mortimore B."/>
            <person name="Kerry G."/>
            <person name="Heath P."/>
            <person name="Phillimore B."/>
            <person name="Tracey A."/>
            <person name="Corby N."/>
            <person name="Dunn M."/>
            <person name="Johnson C."/>
            <person name="Wood J."/>
            <person name="Clark S."/>
            <person name="Pelan S."/>
            <person name="Griffiths G."/>
            <person name="Smith M."/>
            <person name="Glithero R."/>
            <person name="Howden P."/>
            <person name="Barker N."/>
            <person name="Lloyd C."/>
            <person name="Stevens C."/>
            <person name="Harley J."/>
            <person name="Holt K."/>
            <person name="Panagiotidis G."/>
            <person name="Lovell J."/>
            <person name="Beasley H."/>
            <person name="Henderson C."/>
            <person name="Gordon D."/>
            <person name="Auger K."/>
            <person name="Wright D."/>
            <person name="Collins J."/>
            <person name="Raisen C."/>
            <person name="Dyer L."/>
            <person name="Leung K."/>
            <person name="Robertson L."/>
            <person name="Ambridge K."/>
            <person name="Leongamornlert D."/>
            <person name="McGuire S."/>
            <person name="Gilderthorp R."/>
            <person name="Griffiths C."/>
            <person name="Manthravadi D."/>
            <person name="Nichol S."/>
            <person name="Barker G."/>
            <person name="Whitehead S."/>
            <person name="Kay M."/>
            <person name="Brown J."/>
            <person name="Murnane C."/>
            <person name="Gray E."/>
            <person name="Humphries M."/>
            <person name="Sycamore N."/>
            <person name="Barker D."/>
            <person name="Saunders D."/>
            <person name="Wallis J."/>
            <person name="Babbage A."/>
            <person name="Hammond S."/>
            <person name="Mashreghi-Mohammadi M."/>
            <person name="Barr L."/>
            <person name="Martin S."/>
            <person name="Wray P."/>
            <person name="Ellington A."/>
            <person name="Matthews N."/>
            <person name="Ellwood M."/>
            <person name="Woodmansey R."/>
            <person name="Clark G."/>
            <person name="Cooper J."/>
            <person name="Tromans A."/>
            <person name="Grafham D."/>
            <person name="Skuce C."/>
            <person name="Pandian R."/>
            <person name="Andrews R."/>
            <person name="Harrison E."/>
            <person name="Kimberley A."/>
            <person name="Garnett J."/>
            <person name="Fosker N."/>
            <person name="Hall R."/>
            <person name="Garner P."/>
            <person name="Kelly D."/>
            <person name="Bird C."/>
            <person name="Palmer S."/>
            <person name="Gehring I."/>
            <person name="Berger A."/>
            <person name="Dooley C.M."/>
            <person name="Ersan-Urun Z."/>
            <person name="Eser C."/>
            <person name="Geiger H."/>
            <person name="Geisler M."/>
            <person name="Karotki L."/>
            <person name="Kirn A."/>
            <person name="Konantz J."/>
            <person name="Konantz M."/>
            <person name="Oberlander M."/>
            <person name="Rudolph-Geiger S."/>
            <person name="Teucke M."/>
            <person name="Lanz C."/>
            <person name="Raddatz G."/>
            <person name="Osoegawa K."/>
            <person name="Zhu B."/>
            <person name="Rapp A."/>
            <person name="Widaa S."/>
            <person name="Langford C."/>
            <person name="Yang F."/>
            <person name="Schuster S.C."/>
            <person name="Carter N.P."/>
            <person name="Harrow J."/>
            <person name="Ning Z."/>
            <person name="Herrero J."/>
            <person name="Searle S.M."/>
            <person name="Enright A."/>
            <person name="Geisler R."/>
            <person name="Plasterk R.H."/>
            <person name="Lee C."/>
            <person name="Westerfield M."/>
            <person name="de Jong P.J."/>
            <person name="Zon L.I."/>
            <person name="Postlethwait J.H."/>
            <person name="Nusslein-Volhard C."/>
            <person name="Hubbard T.J."/>
            <person name="Roest Crollius H."/>
            <person name="Rogers J."/>
            <person name="Stemple D.L."/>
        </authorList>
    </citation>
    <scope>NUCLEOTIDE SEQUENCE [LARGE SCALE GENOMIC DNA]</scope>
    <source>
        <strain>Tuebingen</strain>
    </source>
</reference>
<reference key="2">
    <citation type="journal article" date="2009" name="PLoS ONE">
        <title>Bili inhibits Wnt/beta-catenin signaling by regulating the recruitment of axin to LRP6.</title>
        <authorList>
            <person name="Kategaya L.S."/>
            <person name="Changkakoty B."/>
            <person name="Biechele T."/>
            <person name="Conrad W.H."/>
            <person name="Kaykas A."/>
            <person name="Dasgupta R."/>
            <person name="Moon R.T."/>
        </authorList>
    </citation>
    <scope>FUNCTION</scope>
    <scope>DEVELOPMENTAL STAGE</scope>
</reference>
<name>FRMD8_DANRE</name>
<dbReference type="EMBL" id="CR450793">
    <property type="status" value="NOT_ANNOTATED_CDS"/>
    <property type="molecule type" value="Genomic_DNA"/>
</dbReference>
<dbReference type="RefSeq" id="NP_001410709.1">
    <property type="nucleotide sequence ID" value="NM_001423780.1"/>
</dbReference>
<dbReference type="RefSeq" id="XP_687842.2">
    <property type="nucleotide sequence ID" value="XM_682750.8"/>
</dbReference>
<dbReference type="SMR" id="E7F221"/>
<dbReference type="FunCoup" id="E7F221">
    <property type="interactions" value="718"/>
</dbReference>
<dbReference type="STRING" id="7955.ENSDARP00000155247"/>
<dbReference type="PaxDb" id="7955-ENSDARP00000115626"/>
<dbReference type="PeptideAtlas" id="E7F221"/>
<dbReference type="Ensembl" id="ENSDART00000135493">
    <property type="protein sequence ID" value="ENSDARP00000115626"/>
    <property type="gene ID" value="ENSDARG00000073696"/>
</dbReference>
<dbReference type="Ensembl" id="ENSDART00000192148">
    <property type="protein sequence ID" value="ENSDARP00000155247"/>
    <property type="gene ID" value="ENSDARG00000073696"/>
</dbReference>
<dbReference type="GeneID" id="559410"/>
<dbReference type="AGR" id="ZFIN:ZDB-GENE-090812-5"/>
<dbReference type="ZFIN" id="ZDB-GENE-090812-5">
    <property type="gene designation" value="frmd8"/>
</dbReference>
<dbReference type="eggNOG" id="KOG4335">
    <property type="taxonomic scope" value="Eukaryota"/>
</dbReference>
<dbReference type="HOGENOM" id="CLU_032351_0_0_1"/>
<dbReference type="InParanoid" id="E7F221"/>
<dbReference type="OMA" id="GCAFFYG"/>
<dbReference type="OrthoDB" id="2142533at2759"/>
<dbReference type="PhylomeDB" id="E7F221"/>
<dbReference type="TreeFam" id="TF317921"/>
<dbReference type="PRO" id="PR:E7F221"/>
<dbReference type="Proteomes" id="UP000000437">
    <property type="component" value="Alternate scaffold 10"/>
</dbReference>
<dbReference type="Proteomes" id="UP000000437">
    <property type="component" value="Chromosome 10"/>
</dbReference>
<dbReference type="Bgee" id="ENSDARG00000073696">
    <property type="expression patterns" value="Expressed in swim bladder and 30 other cell types or tissues"/>
</dbReference>
<dbReference type="GO" id="GO:0005856">
    <property type="term" value="C:cytoskeleton"/>
    <property type="evidence" value="ECO:0007669"/>
    <property type="project" value="InterPro"/>
</dbReference>
<dbReference type="GO" id="GO:0005829">
    <property type="term" value="C:cytosol"/>
    <property type="evidence" value="ECO:0007669"/>
    <property type="project" value="UniProtKB-SubCell"/>
</dbReference>
<dbReference type="GO" id="GO:0005886">
    <property type="term" value="C:plasma membrane"/>
    <property type="evidence" value="ECO:0000318"/>
    <property type="project" value="GO_Central"/>
</dbReference>
<dbReference type="GO" id="GO:0009952">
    <property type="term" value="P:anterior/posterior pattern specification"/>
    <property type="evidence" value="ECO:0000316"/>
    <property type="project" value="ZFIN"/>
</dbReference>
<dbReference type="GO" id="GO:0090090">
    <property type="term" value="P:negative regulation of canonical Wnt signaling pathway"/>
    <property type="evidence" value="ECO:0000318"/>
    <property type="project" value="GO_Central"/>
</dbReference>
<dbReference type="GO" id="GO:0030178">
    <property type="term" value="P:negative regulation of Wnt signaling pathway"/>
    <property type="evidence" value="ECO:0000316"/>
    <property type="project" value="ZFIN"/>
</dbReference>
<dbReference type="GO" id="GO:0060828">
    <property type="term" value="P:regulation of canonical Wnt signaling pathway"/>
    <property type="evidence" value="ECO:0000316"/>
    <property type="project" value="ZFIN"/>
</dbReference>
<dbReference type="CDD" id="cd14473">
    <property type="entry name" value="FERM_B-lobe"/>
    <property type="match status" value="1"/>
</dbReference>
<dbReference type="FunFam" id="1.20.80.10:FF:000023">
    <property type="entry name" value="FERM domain containing 8"/>
    <property type="match status" value="1"/>
</dbReference>
<dbReference type="FunFam" id="2.30.29.30:FF:000216">
    <property type="entry name" value="FERM domain-containing protein 8"/>
    <property type="match status" value="1"/>
</dbReference>
<dbReference type="Gene3D" id="1.20.80.10">
    <property type="match status" value="1"/>
</dbReference>
<dbReference type="Gene3D" id="3.10.20.90">
    <property type="entry name" value="Phosphatidylinositol 3-kinase Catalytic Subunit, Chain A, domain 1"/>
    <property type="match status" value="1"/>
</dbReference>
<dbReference type="Gene3D" id="2.30.29.30">
    <property type="entry name" value="Pleckstrin-homology domain (PH domain)/Phosphotyrosine-binding domain (PTB)"/>
    <property type="match status" value="1"/>
</dbReference>
<dbReference type="InterPro" id="IPR019749">
    <property type="entry name" value="Band_41_domain"/>
</dbReference>
<dbReference type="InterPro" id="IPR014352">
    <property type="entry name" value="FERM/acyl-CoA-bd_prot_sf"/>
</dbReference>
<dbReference type="InterPro" id="IPR035963">
    <property type="entry name" value="FERM_2"/>
</dbReference>
<dbReference type="InterPro" id="IPR019748">
    <property type="entry name" value="FERM_central"/>
</dbReference>
<dbReference type="InterPro" id="IPR000299">
    <property type="entry name" value="FERM_domain"/>
</dbReference>
<dbReference type="InterPro" id="IPR051594">
    <property type="entry name" value="KRIT1/FRMD8"/>
</dbReference>
<dbReference type="InterPro" id="IPR011993">
    <property type="entry name" value="PH-like_dom_sf"/>
</dbReference>
<dbReference type="PANTHER" id="PTHR13283:SF10">
    <property type="entry name" value="FERM DOMAIN-CONTAINING PROTEIN 8"/>
    <property type="match status" value="1"/>
</dbReference>
<dbReference type="PANTHER" id="PTHR13283">
    <property type="entry name" value="KREV INTERACTION TRAPPED 1-RELATED"/>
    <property type="match status" value="1"/>
</dbReference>
<dbReference type="Pfam" id="PF00373">
    <property type="entry name" value="FERM_M"/>
    <property type="match status" value="1"/>
</dbReference>
<dbReference type="Pfam" id="PF24522">
    <property type="entry name" value="KRIT1_FRMD8_FERM_C"/>
    <property type="match status" value="1"/>
</dbReference>
<dbReference type="SMART" id="SM00295">
    <property type="entry name" value="B41"/>
    <property type="match status" value="1"/>
</dbReference>
<dbReference type="SUPFAM" id="SSF47031">
    <property type="entry name" value="Second domain of FERM"/>
    <property type="match status" value="1"/>
</dbReference>
<dbReference type="PROSITE" id="PS50057">
    <property type="entry name" value="FERM_3"/>
    <property type="match status" value="1"/>
</dbReference>
<comment type="function">
    <text evidence="1 4">Promotes the cell surface stability of rhomboid 5 homologs and prevents their degradation via the endolysosomal pathway. By acting on rhomboid 5 homologs, involved in ADAM17-mediated ligand shedding (By similarity). Negatively regulates the Wnt/beta-catenin signaling pathway (PubMed:19572019).</text>
</comment>
<comment type="subcellular location">
    <subcellularLocation>
        <location evidence="1">Cytoplasm</location>
        <location evidence="1">Cytosol</location>
    </subcellularLocation>
    <subcellularLocation>
        <location evidence="1">Cell membrane</location>
    </subcellularLocation>
</comment>
<comment type="developmental stage">
    <text evidence="4">Maternally expressed transcript, detected in the animal pole at 4 hpf. At 5.5 hpf, widely expressed at 50% epiboly. At 24 hpf, widely expressed, with high levels in the otic vesicle. At 36 hpf, weak expression in the tail.</text>
</comment>
<accession>E7F221</accession>
<protein>
    <recommendedName>
        <fullName>FERM domain-containing protein 8</fullName>
    </recommendedName>
    <alternativeName>
        <fullName evidence="5">Band4.1 inhibitor LRP interactor</fullName>
        <shortName evidence="5">Bili</shortName>
    </alternativeName>
</protein>
<organism>
    <name type="scientific">Danio rerio</name>
    <name type="common">Zebrafish</name>
    <name type="synonym">Brachydanio rerio</name>
    <dbReference type="NCBI Taxonomy" id="7955"/>
    <lineage>
        <taxon>Eukaryota</taxon>
        <taxon>Metazoa</taxon>
        <taxon>Chordata</taxon>
        <taxon>Craniata</taxon>
        <taxon>Vertebrata</taxon>
        <taxon>Euteleostomi</taxon>
        <taxon>Actinopterygii</taxon>
        <taxon>Neopterygii</taxon>
        <taxon>Teleostei</taxon>
        <taxon>Ostariophysi</taxon>
        <taxon>Cypriniformes</taxon>
        <taxon>Danionidae</taxon>
        <taxon>Danioninae</taxon>
        <taxon>Danio</taxon>
    </lineage>
</organism>
<proteinExistence type="evidence at transcript level"/>
<keyword id="KW-1003">Cell membrane</keyword>
<keyword id="KW-0963">Cytoplasm</keyword>
<keyword id="KW-0472">Membrane</keyword>
<keyword id="KW-1185">Reference proteome</keyword>
<feature type="chain" id="PRO_0000447189" description="FERM domain-containing protein 8">
    <location>
        <begin position="1"/>
        <end position="471"/>
    </location>
</feature>
<feature type="domain" description="FERM" evidence="2">
    <location>
        <begin position="31"/>
        <end position="382"/>
    </location>
</feature>
<feature type="region of interest" description="Disordered" evidence="3">
    <location>
        <begin position="1"/>
        <end position="23"/>
    </location>
</feature>
<feature type="region of interest" description="Disordered" evidence="3">
    <location>
        <begin position="381"/>
        <end position="416"/>
    </location>
</feature>
<feature type="region of interest" description="Disordered" evidence="3">
    <location>
        <begin position="451"/>
        <end position="471"/>
    </location>
</feature>
<gene>
    <name type="primary">frmd8</name>
</gene>
<sequence length="471" mass="52227">MEGDDGDFPPEPSEHSLSQRGSVASSVTRAQDLLVYLANDSAVHLTLEGLGCMNAQELGRSVREALNIPNSAADVFAFWFCSPLLELQLKPKHLPYKLCRQWQDLLYRFTEAPTEDISLDEPSLLFKRSVFYPRAKELQIEDEGVLRLLYDEAKMNILEGRYPCDPEHWLTLGALSCAIELGTELDDQALTAAIREKKLSSFLPAHAALGGGGFLSTLRGRGGRNAEMEQNLVKECRSVCSSAASGSSQEPIALLRQYLRSCHNLPYYGCAFFAGEIDKPAQGLLHRGGRKAVSVGISLEGVYVMDVKEKHVLLGLKFTELSWDHSYPETEGDSHILWLEFDGEEAGTPVNKLLKIYSKQAELMSGLIEFCVELRSVSESAATGTDGEVTPSHEPTSPETNNKTRERRQGKLRRQNSVVCSRVHSLSTINYVDDGKEIKRLKPKRAASFFTRQAQPPTYSAVQVTESLEQG</sequence>